<organism>
    <name type="scientific">Arabidopsis thaliana</name>
    <name type="common">Mouse-ear cress</name>
    <dbReference type="NCBI Taxonomy" id="3702"/>
    <lineage>
        <taxon>Eukaryota</taxon>
        <taxon>Viridiplantae</taxon>
        <taxon>Streptophyta</taxon>
        <taxon>Embryophyta</taxon>
        <taxon>Tracheophyta</taxon>
        <taxon>Spermatophyta</taxon>
        <taxon>Magnoliopsida</taxon>
        <taxon>eudicotyledons</taxon>
        <taxon>Gunneridae</taxon>
        <taxon>Pentapetalae</taxon>
        <taxon>rosids</taxon>
        <taxon>malvids</taxon>
        <taxon>Brassicales</taxon>
        <taxon>Brassicaceae</taxon>
        <taxon>Camelineae</taxon>
        <taxon>Arabidopsis</taxon>
    </lineage>
</organism>
<comment type="function">
    <text evidence="1">Mediates an active uptake of hexoses, probably by sugar/hydrogen symport.</text>
</comment>
<comment type="subcellular location">
    <subcellularLocation>
        <location evidence="4">Cell membrane</location>
        <topology evidence="4">Multi-pass membrane protein</topology>
    </subcellularLocation>
</comment>
<comment type="similarity">
    <text evidence="3">Belongs to the major facilitator superfamily. Sugar transporter (TC 2.A.1.1) family.</text>
</comment>
<comment type="sequence caution" evidence="3">
    <conflict type="erroneous termination">
        <sequence resource="EMBL-CDS" id="AAK73949"/>
    </conflict>
    <text>Truncated C-terminus.</text>
</comment>
<comment type="sequence caution" evidence="3">
    <conflict type="erroneous termination">
        <sequence resource="EMBL-CDS" id="AAN28848"/>
    </conflict>
    <text>Truncated C-terminus.</text>
</comment>
<name>STP13_ARATH</name>
<gene>
    <name type="primary">STP13</name>
    <name type="synonym">MSS1</name>
    <name type="ordered locus">At5g26340</name>
    <name type="ORF">F9D12.17</name>
</gene>
<proteinExistence type="evidence at protein level"/>
<keyword id="KW-1003">Cell membrane</keyword>
<keyword id="KW-0472">Membrane</keyword>
<keyword id="KW-1185">Reference proteome</keyword>
<keyword id="KW-0762">Sugar transport</keyword>
<keyword id="KW-0769">Symport</keyword>
<keyword id="KW-0812">Transmembrane</keyword>
<keyword id="KW-1133">Transmembrane helix</keyword>
<keyword id="KW-0813">Transport</keyword>
<accession>Q94AZ2</accession>
<accession>O81501</accession>
<accession>Q0WM12</accession>
<reference key="1">
    <citation type="journal article" date="2000" name="Plant J.">
        <title>Functional identification of an Arabidopsis Snf4 ortholog by screening for heterologous multicopy suppressors of snf4 deficiency in yeast.</title>
        <authorList>
            <person name="Kleinow T."/>
            <person name="Bhalerao R."/>
            <person name="Breuer F."/>
            <person name="Umeda M."/>
            <person name="Salchert K."/>
            <person name="Koncz C."/>
        </authorList>
    </citation>
    <scope>NUCLEOTIDE SEQUENCE [MRNA]</scope>
    <source>
        <strain>cv. Columbia</strain>
    </source>
</reference>
<reference key="2">
    <citation type="submission" date="2001-09" db="EMBL/GenBank/DDBJ databases">
        <title>STP13, a new monosaccharide/H+ symporter from Arabidopsis thaliana.</title>
        <authorList>
            <person name="Buettner M."/>
        </authorList>
    </citation>
    <scope>NUCLEOTIDE SEQUENCE [MRNA]</scope>
</reference>
<reference key="3">
    <citation type="journal article" date="2000" name="Nature">
        <title>Sequence and analysis of chromosome 5 of the plant Arabidopsis thaliana.</title>
        <authorList>
            <person name="Tabata S."/>
            <person name="Kaneko T."/>
            <person name="Nakamura Y."/>
            <person name="Kotani H."/>
            <person name="Kato T."/>
            <person name="Asamizu E."/>
            <person name="Miyajima N."/>
            <person name="Sasamoto S."/>
            <person name="Kimura T."/>
            <person name="Hosouchi T."/>
            <person name="Kawashima K."/>
            <person name="Kohara M."/>
            <person name="Matsumoto M."/>
            <person name="Matsuno A."/>
            <person name="Muraki A."/>
            <person name="Nakayama S."/>
            <person name="Nakazaki N."/>
            <person name="Naruo K."/>
            <person name="Okumura S."/>
            <person name="Shinpo S."/>
            <person name="Takeuchi C."/>
            <person name="Wada T."/>
            <person name="Watanabe A."/>
            <person name="Yamada M."/>
            <person name="Yasuda M."/>
            <person name="Sato S."/>
            <person name="de la Bastide M."/>
            <person name="Huang E."/>
            <person name="Spiegel L."/>
            <person name="Gnoj L."/>
            <person name="O'Shaughnessy A."/>
            <person name="Preston R."/>
            <person name="Habermann K."/>
            <person name="Murray J."/>
            <person name="Johnson D."/>
            <person name="Rohlfing T."/>
            <person name="Nelson J."/>
            <person name="Stoneking T."/>
            <person name="Pepin K."/>
            <person name="Spieth J."/>
            <person name="Sekhon M."/>
            <person name="Armstrong J."/>
            <person name="Becker M."/>
            <person name="Belter E."/>
            <person name="Cordum H."/>
            <person name="Cordes M."/>
            <person name="Courtney L."/>
            <person name="Courtney W."/>
            <person name="Dante M."/>
            <person name="Du H."/>
            <person name="Edwards J."/>
            <person name="Fryman J."/>
            <person name="Haakensen B."/>
            <person name="Lamar E."/>
            <person name="Latreille P."/>
            <person name="Leonard S."/>
            <person name="Meyer R."/>
            <person name="Mulvaney E."/>
            <person name="Ozersky P."/>
            <person name="Riley A."/>
            <person name="Strowmatt C."/>
            <person name="Wagner-McPherson C."/>
            <person name="Wollam A."/>
            <person name="Yoakum M."/>
            <person name="Bell M."/>
            <person name="Dedhia N."/>
            <person name="Parnell L."/>
            <person name="Shah R."/>
            <person name="Rodriguez M."/>
            <person name="Hoon See L."/>
            <person name="Vil D."/>
            <person name="Baker J."/>
            <person name="Kirchoff K."/>
            <person name="Toth K."/>
            <person name="King L."/>
            <person name="Bahret A."/>
            <person name="Miller B."/>
            <person name="Marra M.A."/>
            <person name="Martienssen R."/>
            <person name="McCombie W.R."/>
            <person name="Wilson R.K."/>
            <person name="Murphy G."/>
            <person name="Bancroft I."/>
            <person name="Volckaert G."/>
            <person name="Wambutt R."/>
            <person name="Duesterhoeft A."/>
            <person name="Stiekema W."/>
            <person name="Pohl T."/>
            <person name="Entian K.-D."/>
            <person name="Terryn N."/>
            <person name="Hartley N."/>
            <person name="Bent E."/>
            <person name="Johnson S."/>
            <person name="Langham S.-A."/>
            <person name="McCullagh B."/>
            <person name="Robben J."/>
            <person name="Grymonprez B."/>
            <person name="Zimmermann W."/>
            <person name="Ramsperger U."/>
            <person name="Wedler H."/>
            <person name="Balke K."/>
            <person name="Wedler E."/>
            <person name="Peters S."/>
            <person name="van Staveren M."/>
            <person name="Dirkse W."/>
            <person name="Mooijman P."/>
            <person name="Klein Lankhorst R."/>
            <person name="Weitzenegger T."/>
            <person name="Bothe G."/>
            <person name="Rose M."/>
            <person name="Hauf J."/>
            <person name="Berneiser S."/>
            <person name="Hempel S."/>
            <person name="Feldpausch M."/>
            <person name="Lamberth S."/>
            <person name="Villarroel R."/>
            <person name="Gielen J."/>
            <person name="Ardiles W."/>
            <person name="Bents O."/>
            <person name="Lemcke K."/>
            <person name="Kolesov G."/>
            <person name="Mayer K.F.X."/>
            <person name="Rudd S."/>
            <person name="Schoof H."/>
            <person name="Schueller C."/>
            <person name="Zaccaria P."/>
            <person name="Mewes H.-W."/>
            <person name="Bevan M."/>
            <person name="Fransz P.F."/>
        </authorList>
    </citation>
    <scope>NUCLEOTIDE SEQUENCE [LARGE SCALE GENOMIC DNA]</scope>
    <source>
        <strain>cv. Columbia</strain>
    </source>
</reference>
<reference key="4">
    <citation type="journal article" date="2017" name="Plant J.">
        <title>Araport11: a complete reannotation of the Arabidopsis thaliana reference genome.</title>
        <authorList>
            <person name="Cheng C.Y."/>
            <person name="Krishnakumar V."/>
            <person name="Chan A.P."/>
            <person name="Thibaud-Nissen F."/>
            <person name="Schobel S."/>
            <person name="Town C.D."/>
        </authorList>
    </citation>
    <scope>GENOME REANNOTATION</scope>
    <source>
        <strain>cv. Columbia</strain>
    </source>
</reference>
<reference key="5">
    <citation type="journal article" date="2003" name="Science">
        <title>Empirical analysis of transcriptional activity in the Arabidopsis genome.</title>
        <authorList>
            <person name="Yamada K."/>
            <person name="Lim J."/>
            <person name="Dale J.M."/>
            <person name="Chen H."/>
            <person name="Shinn P."/>
            <person name="Palm C.J."/>
            <person name="Southwick A.M."/>
            <person name="Wu H.C."/>
            <person name="Kim C.J."/>
            <person name="Nguyen M."/>
            <person name="Pham P.K."/>
            <person name="Cheuk R.F."/>
            <person name="Karlin-Newmann G."/>
            <person name="Liu S.X."/>
            <person name="Lam B."/>
            <person name="Sakano H."/>
            <person name="Wu T."/>
            <person name="Yu G."/>
            <person name="Miranda M."/>
            <person name="Quach H.L."/>
            <person name="Tripp M."/>
            <person name="Chang C.H."/>
            <person name="Lee J.M."/>
            <person name="Toriumi M.J."/>
            <person name="Chan M.M."/>
            <person name="Tang C.C."/>
            <person name="Onodera C.S."/>
            <person name="Deng J.M."/>
            <person name="Akiyama K."/>
            <person name="Ansari Y."/>
            <person name="Arakawa T."/>
            <person name="Banh J."/>
            <person name="Banno F."/>
            <person name="Bowser L."/>
            <person name="Brooks S.Y."/>
            <person name="Carninci P."/>
            <person name="Chao Q."/>
            <person name="Choy N."/>
            <person name="Enju A."/>
            <person name="Goldsmith A.D."/>
            <person name="Gurjal M."/>
            <person name="Hansen N.F."/>
            <person name="Hayashizaki Y."/>
            <person name="Johnson-Hopson C."/>
            <person name="Hsuan V.W."/>
            <person name="Iida K."/>
            <person name="Karnes M."/>
            <person name="Khan S."/>
            <person name="Koesema E."/>
            <person name="Ishida J."/>
            <person name="Jiang P.X."/>
            <person name="Jones T."/>
            <person name="Kawai J."/>
            <person name="Kamiya A."/>
            <person name="Meyers C."/>
            <person name="Nakajima M."/>
            <person name="Narusaka M."/>
            <person name="Seki M."/>
            <person name="Sakurai T."/>
            <person name="Satou M."/>
            <person name="Tamse R."/>
            <person name="Vaysberg M."/>
            <person name="Wallender E.K."/>
            <person name="Wong C."/>
            <person name="Yamamura Y."/>
            <person name="Yuan S."/>
            <person name="Shinozaki K."/>
            <person name="Davis R.W."/>
            <person name="Theologis A."/>
            <person name="Ecker J.R."/>
        </authorList>
    </citation>
    <scope>NUCLEOTIDE SEQUENCE [LARGE SCALE MRNA]</scope>
    <source>
        <strain>cv. Columbia</strain>
    </source>
</reference>
<reference key="6">
    <citation type="submission" date="2006-07" db="EMBL/GenBank/DDBJ databases">
        <title>Large-scale analysis of RIKEN Arabidopsis full-length (RAFL) cDNAs.</title>
        <authorList>
            <person name="Totoki Y."/>
            <person name="Seki M."/>
            <person name="Ishida J."/>
            <person name="Nakajima M."/>
            <person name="Enju A."/>
            <person name="Kamiya A."/>
            <person name="Narusaka M."/>
            <person name="Shin-i T."/>
            <person name="Nakagawa M."/>
            <person name="Sakamoto N."/>
            <person name="Oishi K."/>
            <person name="Kohara Y."/>
            <person name="Kobayashi M."/>
            <person name="Toyoda A."/>
            <person name="Sakaki Y."/>
            <person name="Sakurai T."/>
            <person name="Iida K."/>
            <person name="Akiyama K."/>
            <person name="Satou M."/>
            <person name="Toyoda T."/>
            <person name="Konagaya A."/>
            <person name="Carninci P."/>
            <person name="Kawai J."/>
            <person name="Hayashizaki Y."/>
            <person name="Shinozaki K."/>
        </authorList>
    </citation>
    <scope>NUCLEOTIDE SEQUENCE [LARGE SCALE MRNA] OF 360-526</scope>
    <source>
        <strain>cv. Columbia</strain>
    </source>
</reference>
<reference key="7">
    <citation type="journal article" date="2003" name="Mol. Cell. Proteomics">
        <title>Large-scale analysis of in vivo phosphorylated membrane proteins by immobilized metal ion affinity chromatography and mass spectrometry.</title>
        <authorList>
            <person name="Nuehse T.S."/>
            <person name="Stensballe A."/>
            <person name="Jensen O.N."/>
            <person name="Peck S.C."/>
        </authorList>
    </citation>
    <scope>IDENTIFICATION BY MASS SPECTROMETRY [LARGE SCALE ANALYSIS]</scope>
    <source>
        <strain>cv. La-0</strain>
    </source>
</reference>
<reference key="8">
    <citation type="journal article" date="2004" name="Plant Cell">
        <title>Phosphoproteomics of the Arabidopsis plasma membrane and a new phosphorylation site database.</title>
        <authorList>
            <person name="Nuehse T.S."/>
            <person name="Stensballe A."/>
            <person name="Jensen O.N."/>
            <person name="Peck S.C."/>
        </authorList>
    </citation>
    <scope>SUBCELLULAR LOCATION</scope>
</reference>
<reference key="9">
    <citation type="journal article" date="2006" name="BMC Evol. Biol.">
        <title>The monosaccharide transporter gene family in land plants is ancient and shows differential subfamily expression and expansion across lineages.</title>
        <authorList>
            <person name="Johnson D.A."/>
            <person name="Hill J.P."/>
            <person name="Thomas M.A."/>
        </authorList>
    </citation>
    <scope>GENE FAMILY</scope>
</reference>
<feature type="chain" id="PRO_0000050443" description="Sugar transport protein 13">
    <location>
        <begin position="1"/>
        <end position="526"/>
    </location>
</feature>
<feature type="topological domain" description="Cytoplasmic" evidence="2">
    <location>
        <begin position="1"/>
        <end position="18"/>
    </location>
</feature>
<feature type="transmembrane region" description="Helical" evidence="2">
    <location>
        <begin position="19"/>
        <end position="39"/>
    </location>
</feature>
<feature type="topological domain" description="Extracellular" evidence="2">
    <location>
        <begin position="40"/>
        <end position="81"/>
    </location>
</feature>
<feature type="transmembrane region" description="Helical" evidence="2">
    <location>
        <begin position="82"/>
        <end position="102"/>
    </location>
</feature>
<feature type="topological domain" description="Cytoplasmic" evidence="2">
    <location>
        <begin position="103"/>
        <end position="111"/>
    </location>
</feature>
<feature type="transmembrane region" description="Helical" evidence="2">
    <location>
        <begin position="112"/>
        <end position="132"/>
    </location>
</feature>
<feature type="topological domain" description="Extracellular" evidence="2">
    <location>
        <begin position="133"/>
        <end position="141"/>
    </location>
</feature>
<feature type="transmembrane region" description="Helical" evidence="2">
    <location>
        <begin position="142"/>
        <end position="162"/>
    </location>
</feature>
<feature type="topological domain" description="Cytoplasmic" evidence="2">
    <location>
        <begin position="163"/>
        <end position="168"/>
    </location>
</feature>
<feature type="transmembrane region" description="Helical" evidence="2">
    <location>
        <begin position="169"/>
        <end position="189"/>
    </location>
</feature>
<feature type="topological domain" description="Extracellular" evidence="2">
    <location>
        <begin position="190"/>
        <end position="203"/>
    </location>
</feature>
<feature type="transmembrane region" description="Helical" evidence="2">
    <location>
        <begin position="204"/>
        <end position="224"/>
    </location>
</feature>
<feature type="topological domain" description="Cytoplasmic" evidence="2">
    <location>
        <begin position="225"/>
        <end position="296"/>
    </location>
</feature>
<feature type="transmembrane region" description="Helical" evidence="2">
    <location>
        <begin position="297"/>
        <end position="317"/>
    </location>
</feature>
<feature type="topological domain" description="Extracellular" evidence="2">
    <location>
        <begin position="318"/>
        <end position="319"/>
    </location>
</feature>
<feature type="transmembrane region" description="Helical" evidence="2">
    <location>
        <begin position="320"/>
        <end position="340"/>
    </location>
</feature>
<feature type="topological domain" description="Cytoplasmic" evidence="2">
    <location>
        <begin position="341"/>
        <end position="349"/>
    </location>
</feature>
<feature type="transmembrane region" description="Helical" evidence="2">
    <location>
        <begin position="350"/>
        <end position="370"/>
    </location>
</feature>
<feature type="topological domain" description="Extracellular" evidence="2">
    <location>
        <begin position="371"/>
        <end position="383"/>
    </location>
</feature>
<feature type="transmembrane region" description="Helical" evidence="2">
    <location>
        <begin position="384"/>
        <end position="404"/>
    </location>
</feature>
<feature type="topological domain" description="Cytoplasmic" evidence="2">
    <location>
        <begin position="405"/>
        <end position="426"/>
    </location>
</feature>
<feature type="transmembrane region" description="Helical" evidence="2">
    <location>
        <begin position="427"/>
        <end position="447"/>
    </location>
</feature>
<feature type="topological domain" description="Extracellular" evidence="2">
    <location>
        <begin position="448"/>
        <end position="451"/>
    </location>
</feature>
<feature type="transmembrane region" description="Helical" evidence="2">
    <location>
        <begin position="452"/>
        <end position="472"/>
    </location>
</feature>
<feature type="topological domain" description="Cytoplasmic" evidence="2">
    <location>
        <begin position="473"/>
        <end position="526"/>
    </location>
</feature>
<feature type="sequence conflict" description="In Ref. 5; AAK73949/AAN28848." evidence="3" ref="5">
    <original>F</original>
    <variation>Y</variation>
    <location>
        <position position="316"/>
    </location>
</feature>
<evidence type="ECO:0000250" key="1"/>
<evidence type="ECO:0000255" key="2"/>
<evidence type="ECO:0000305" key="3"/>
<evidence type="ECO:0000305" key="4">
    <source>
    </source>
</evidence>
<sequence length="526" mass="57419">MTGGGFATSANGVEFEAKITPIVIISCIMAATGGLMFGYDVGVSGGVTSMPDFLEKFFPVVYRKVVAGADKDSNYCKYDNQGLQLFTSSLYLAGLTATFFASYTTRTLGRRLTMLIAGVFFIIGVALNAGAQDLAMLIAGRILLGCGVGFANQAVPLFLSEIAPTRIRGGLNILFQLNVTIGILFANLVNYGTAKIKGGWGWRLSLGLAGIPALLLTVGALLVTETPNSLVERGRLDEGKAVLRRIRGTDNVEPEFADLLEASRLAKEVKHPFRNLLQRRNRPQLVIAVALQIFQQCTGINAIMFYAPVLFSTLGFGSDASLYSAVVTGAVNVLSTLVSIYSVDKVGRRVLLLEAGVQMFFSQVVIAIILGVKVTDTSTNLSKGFAILVVVMICTYVAAFAWSWGPLGWLIPSETFPLETRSAGQSVTVCVNLLFTFIIAQAFLSMLCHFKFGIFIFFSAWVLIMSVFVMFLLPETKNIPIEEMTERVWKKHWFWARFMDDHNDHEFVNGEKSNGKSNGFDPSTRL</sequence>
<dbReference type="EMBL" id="AF250340">
    <property type="protein sequence ID" value="AAG10146.1"/>
    <property type="molecule type" value="mRNA"/>
</dbReference>
<dbReference type="EMBL" id="AJ344338">
    <property type="protein sequence ID" value="CAC69074.1"/>
    <property type="molecule type" value="mRNA"/>
</dbReference>
<dbReference type="EMBL" id="AF077407">
    <property type="protein sequence ID" value="AAC26243.1"/>
    <property type="molecule type" value="Genomic_DNA"/>
</dbReference>
<dbReference type="EMBL" id="CP002688">
    <property type="protein sequence ID" value="AED93553.1"/>
    <property type="molecule type" value="Genomic_DNA"/>
</dbReference>
<dbReference type="EMBL" id="AY045591">
    <property type="protein sequence ID" value="AAK73949.1"/>
    <property type="status" value="ALT_SEQ"/>
    <property type="molecule type" value="mRNA"/>
</dbReference>
<dbReference type="EMBL" id="AY052692">
    <property type="protein sequence ID" value="AAK96596.1"/>
    <property type="molecule type" value="mRNA"/>
</dbReference>
<dbReference type="EMBL" id="AY143909">
    <property type="protein sequence ID" value="AAN28848.1"/>
    <property type="status" value="ALT_SEQ"/>
    <property type="molecule type" value="mRNA"/>
</dbReference>
<dbReference type="EMBL" id="AK230023">
    <property type="protein sequence ID" value="BAF01845.1"/>
    <property type="molecule type" value="mRNA"/>
</dbReference>
<dbReference type="PIR" id="T01853">
    <property type="entry name" value="T01853"/>
</dbReference>
<dbReference type="RefSeq" id="NP_198006.1">
    <property type="nucleotide sequence ID" value="NM_122535.4"/>
</dbReference>
<dbReference type="SMR" id="Q94AZ2"/>
<dbReference type="BioGRID" id="17978">
    <property type="interactions" value="5"/>
</dbReference>
<dbReference type="FunCoup" id="Q94AZ2">
    <property type="interactions" value="270"/>
</dbReference>
<dbReference type="IntAct" id="Q94AZ2">
    <property type="interactions" value="3"/>
</dbReference>
<dbReference type="STRING" id="3702.Q94AZ2"/>
<dbReference type="TCDB" id="2.A.1.1.50">
    <property type="family name" value="the major facilitator superfamily (mfs)"/>
</dbReference>
<dbReference type="iPTMnet" id="Q94AZ2"/>
<dbReference type="SwissPalm" id="Q94AZ2"/>
<dbReference type="PaxDb" id="3702-AT5G26340.1"/>
<dbReference type="ProteomicsDB" id="228307"/>
<dbReference type="EnsemblPlants" id="AT5G26340.1">
    <property type="protein sequence ID" value="AT5G26340.1"/>
    <property type="gene ID" value="AT5G26340"/>
</dbReference>
<dbReference type="GeneID" id="832703"/>
<dbReference type="Gramene" id="AT5G26340.1">
    <property type="protein sequence ID" value="AT5G26340.1"/>
    <property type="gene ID" value="AT5G26340"/>
</dbReference>
<dbReference type="KEGG" id="ath:AT5G26340"/>
<dbReference type="Araport" id="AT5G26340"/>
<dbReference type="TAIR" id="AT5G26340">
    <property type="gene designation" value="MSS1"/>
</dbReference>
<dbReference type="eggNOG" id="KOG0254">
    <property type="taxonomic scope" value="Eukaryota"/>
</dbReference>
<dbReference type="HOGENOM" id="CLU_001265_30_5_1"/>
<dbReference type="InParanoid" id="Q94AZ2"/>
<dbReference type="OMA" id="VMVVFAC"/>
<dbReference type="OrthoDB" id="5296287at2759"/>
<dbReference type="PhylomeDB" id="Q94AZ2"/>
<dbReference type="PRO" id="PR:Q94AZ2"/>
<dbReference type="Proteomes" id="UP000006548">
    <property type="component" value="Chromosome 5"/>
</dbReference>
<dbReference type="ExpressionAtlas" id="Q94AZ2">
    <property type="expression patterns" value="baseline and differential"/>
</dbReference>
<dbReference type="GO" id="GO:0005886">
    <property type="term" value="C:plasma membrane"/>
    <property type="evidence" value="ECO:0000314"/>
    <property type="project" value="TAIR"/>
</dbReference>
<dbReference type="GO" id="GO:0009506">
    <property type="term" value="C:plasmodesma"/>
    <property type="evidence" value="ECO:0007005"/>
    <property type="project" value="TAIR"/>
</dbReference>
<dbReference type="GO" id="GO:0009536">
    <property type="term" value="C:plastid"/>
    <property type="evidence" value="ECO:0007005"/>
    <property type="project" value="TAIR"/>
</dbReference>
<dbReference type="GO" id="GO:0009679">
    <property type="term" value="F:hexose:proton symporter activity"/>
    <property type="evidence" value="ECO:0000314"/>
    <property type="project" value="TAIR"/>
</dbReference>
<dbReference type="GO" id="GO:0005358">
    <property type="term" value="F:high-affinity D-glucose:proton symporter activity"/>
    <property type="evidence" value="ECO:0000314"/>
    <property type="project" value="TAIR"/>
</dbReference>
<dbReference type="GO" id="GO:0015145">
    <property type="term" value="F:monosaccharide transmembrane transporter activity"/>
    <property type="evidence" value="ECO:0000315"/>
    <property type="project" value="TAIR"/>
</dbReference>
<dbReference type="GO" id="GO:0015749">
    <property type="term" value="P:monosaccharide transmembrane transport"/>
    <property type="evidence" value="ECO:0000315"/>
    <property type="project" value="TAIR"/>
</dbReference>
<dbReference type="GO" id="GO:0009737">
    <property type="term" value="P:response to abscisic acid"/>
    <property type="evidence" value="ECO:0000270"/>
    <property type="project" value="TAIR"/>
</dbReference>
<dbReference type="GO" id="GO:0009651">
    <property type="term" value="P:response to salt stress"/>
    <property type="evidence" value="ECO:0000270"/>
    <property type="project" value="TAIR"/>
</dbReference>
<dbReference type="GO" id="GO:0009414">
    <property type="term" value="P:response to water deprivation"/>
    <property type="evidence" value="ECO:0000270"/>
    <property type="project" value="TAIR"/>
</dbReference>
<dbReference type="CDD" id="cd17361">
    <property type="entry name" value="MFS_STP"/>
    <property type="match status" value="1"/>
</dbReference>
<dbReference type="FunFam" id="1.20.1250.20:FF:000002">
    <property type="entry name" value="Sugar transport protein 13"/>
    <property type="match status" value="1"/>
</dbReference>
<dbReference type="Gene3D" id="1.20.1250.20">
    <property type="entry name" value="MFS general substrate transporter like domains"/>
    <property type="match status" value="1"/>
</dbReference>
<dbReference type="InterPro" id="IPR020846">
    <property type="entry name" value="MFS_dom"/>
</dbReference>
<dbReference type="InterPro" id="IPR044778">
    <property type="entry name" value="MFS_STP/MST-like_plant"/>
</dbReference>
<dbReference type="InterPro" id="IPR005828">
    <property type="entry name" value="MFS_sugar_transport-like"/>
</dbReference>
<dbReference type="InterPro" id="IPR036259">
    <property type="entry name" value="MFS_trans_sf"/>
</dbReference>
<dbReference type="InterPro" id="IPR045262">
    <property type="entry name" value="STP/PLT_plant"/>
</dbReference>
<dbReference type="InterPro" id="IPR003663">
    <property type="entry name" value="Sugar/inositol_transpt"/>
</dbReference>
<dbReference type="InterPro" id="IPR005829">
    <property type="entry name" value="Sugar_transporter_CS"/>
</dbReference>
<dbReference type="NCBIfam" id="TIGR00879">
    <property type="entry name" value="SP"/>
    <property type="match status" value="1"/>
</dbReference>
<dbReference type="PANTHER" id="PTHR23500:SF357">
    <property type="entry name" value="IP12678P"/>
    <property type="match status" value="1"/>
</dbReference>
<dbReference type="PANTHER" id="PTHR23500">
    <property type="entry name" value="SOLUTE CARRIER FAMILY 2, FACILITATED GLUCOSE TRANSPORTER"/>
    <property type="match status" value="1"/>
</dbReference>
<dbReference type="Pfam" id="PF00083">
    <property type="entry name" value="Sugar_tr"/>
    <property type="match status" value="1"/>
</dbReference>
<dbReference type="PRINTS" id="PR00171">
    <property type="entry name" value="SUGRTRNSPORT"/>
</dbReference>
<dbReference type="SUPFAM" id="SSF103473">
    <property type="entry name" value="MFS general substrate transporter"/>
    <property type="match status" value="1"/>
</dbReference>
<dbReference type="PROSITE" id="PS50850">
    <property type="entry name" value="MFS"/>
    <property type="match status" value="1"/>
</dbReference>
<dbReference type="PROSITE" id="PS00216">
    <property type="entry name" value="SUGAR_TRANSPORT_1"/>
    <property type="match status" value="1"/>
</dbReference>
<protein>
    <recommendedName>
        <fullName>Sugar transport protein 13</fullName>
    </recommendedName>
    <alternativeName>
        <fullName>Hexose transporter 13</fullName>
    </alternativeName>
    <alternativeName>
        <fullName>Multicopy suppressor of snf4 deficiency protein 1</fullName>
    </alternativeName>
</protein>